<feature type="chain" id="PRO_1000019047" description="1-deoxy-D-xylulose-5-phosphate synthase">
    <location>
        <begin position="1"/>
        <end position="637"/>
    </location>
</feature>
<feature type="binding site" evidence="1">
    <location>
        <position position="71"/>
    </location>
    <ligand>
        <name>thiamine diphosphate</name>
        <dbReference type="ChEBI" id="CHEBI:58937"/>
    </ligand>
</feature>
<feature type="binding site" evidence="1">
    <location>
        <begin position="112"/>
        <end position="114"/>
    </location>
    <ligand>
        <name>thiamine diphosphate</name>
        <dbReference type="ChEBI" id="CHEBI:58937"/>
    </ligand>
</feature>
<feature type="binding site" evidence="1">
    <location>
        <position position="144"/>
    </location>
    <ligand>
        <name>Mg(2+)</name>
        <dbReference type="ChEBI" id="CHEBI:18420"/>
    </ligand>
</feature>
<feature type="binding site" evidence="1">
    <location>
        <begin position="145"/>
        <end position="146"/>
    </location>
    <ligand>
        <name>thiamine diphosphate</name>
        <dbReference type="ChEBI" id="CHEBI:58937"/>
    </ligand>
</feature>
<feature type="binding site" evidence="1">
    <location>
        <position position="173"/>
    </location>
    <ligand>
        <name>Mg(2+)</name>
        <dbReference type="ChEBI" id="CHEBI:18420"/>
    </ligand>
</feature>
<feature type="binding site" evidence="1">
    <location>
        <position position="173"/>
    </location>
    <ligand>
        <name>thiamine diphosphate</name>
        <dbReference type="ChEBI" id="CHEBI:58937"/>
    </ligand>
</feature>
<feature type="binding site" evidence="1">
    <location>
        <position position="284"/>
    </location>
    <ligand>
        <name>thiamine diphosphate</name>
        <dbReference type="ChEBI" id="CHEBI:58937"/>
    </ligand>
</feature>
<feature type="binding site" evidence="1">
    <location>
        <position position="365"/>
    </location>
    <ligand>
        <name>thiamine diphosphate</name>
        <dbReference type="ChEBI" id="CHEBI:58937"/>
    </ligand>
</feature>
<sequence>MLEQIRGPADLQHLSQAQLEDLAHEIRDFLIHKVAATGGHLGPNLGVVELTLALHRVFDSPHDPILFDTGHQAYVHKMLTGRCRDFDSLRKKDGLSGYPSSAESEHDWIESSHASSALSYADGLAKAFELSGHRNRHVVAVVGDGALTGGMCWEALNNIAASRRPVVIVVNDNGRSYAPTIGGFAEHLAGLRLQPGYERVLEEGRKAVRGVPMIGEFCYQCMHSIKVGIKDALSPQVMFTDLGLKYVGPIDGHDEHAVESALRHARAFNAPVVVHVVTRKGMGYAPAENDADDQMHACGVIDPETGLATSVPGPGWTSTFSEALIRLAGKRRDIVAITAAMPGPTGLSAFRDRFPDRFFDVGIAEQHAMTSAAGLAMGGMHPVVAIYSTFLNRAFDQMLMDVALHKLPVTVVLDRSGVTGPDGASHNGMWDLSILGIVPGMRVAAPRDGARLREELGEALDVSDGPTAIRFPKGDVGEDIPAIERRGDVDVLAVPADGMSEDVLLVAVGPFAAMALAVADRLRNQGIGVTVVDPRWVLPVPEEIATLATRHKLVVTLEDNGGHGGVGSAVSGALRHKEIDVPCRDAALPQEFFAHASRGEVLESVGLTERNIARQITGWVAALGASTGDREVSEHVD</sequence>
<evidence type="ECO:0000255" key="1">
    <source>
        <dbReference type="HAMAP-Rule" id="MF_00315"/>
    </source>
</evidence>
<proteinExistence type="inferred from homology"/>
<keyword id="KW-0414">Isoprene biosynthesis</keyword>
<keyword id="KW-0460">Magnesium</keyword>
<keyword id="KW-0479">Metal-binding</keyword>
<keyword id="KW-0784">Thiamine biosynthesis</keyword>
<keyword id="KW-0786">Thiamine pyrophosphate</keyword>
<keyword id="KW-0808">Transferase</keyword>
<reference key="1">
    <citation type="submission" date="2006-12" db="EMBL/GenBank/DDBJ databases">
        <title>Complete sequence of Mycobacterium vanbaalenii PYR-1.</title>
        <authorList>
            <consortium name="US DOE Joint Genome Institute"/>
            <person name="Copeland A."/>
            <person name="Lucas S."/>
            <person name="Lapidus A."/>
            <person name="Barry K."/>
            <person name="Detter J.C."/>
            <person name="Glavina del Rio T."/>
            <person name="Hammon N."/>
            <person name="Israni S."/>
            <person name="Dalin E."/>
            <person name="Tice H."/>
            <person name="Pitluck S."/>
            <person name="Singan V."/>
            <person name="Schmutz J."/>
            <person name="Larimer F."/>
            <person name="Land M."/>
            <person name="Hauser L."/>
            <person name="Kyrpides N."/>
            <person name="Anderson I.J."/>
            <person name="Miller C."/>
            <person name="Richardson P."/>
        </authorList>
    </citation>
    <scope>NUCLEOTIDE SEQUENCE [LARGE SCALE GENOMIC DNA]</scope>
    <source>
        <strain>DSM 7251 / JCM 13017 / BCRC 16820 / KCTC 9966 / NRRL B-24157 / PYR-1</strain>
    </source>
</reference>
<gene>
    <name evidence="1" type="primary">dxs</name>
    <name type="ordered locus">Mvan_2477</name>
</gene>
<dbReference type="EC" id="2.2.1.7" evidence="1"/>
<dbReference type="EMBL" id="CP000511">
    <property type="protein sequence ID" value="ABM13290.1"/>
    <property type="molecule type" value="Genomic_DNA"/>
</dbReference>
<dbReference type="RefSeq" id="WP_011779702.1">
    <property type="nucleotide sequence ID" value="NZ_JACKSD010000077.1"/>
</dbReference>
<dbReference type="SMR" id="A1T7Z0"/>
<dbReference type="STRING" id="350058.Mvan_2477"/>
<dbReference type="KEGG" id="mva:Mvan_2477"/>
<dbReference type="eggNOG" id="COG1154">
    <property type="taxonomic scope" value="Bacteria"/>
</dbReference>
<dbReference type="HOGENOM" id="CLU_009227_1_4_11"/>
<dbReference type="UniPathway" id="UPA00064">
    <property type="reaction ID" value="UER00091"/>
</dbReference>
<dbReference type="Proteomes" id="UP000009159">
    <property type="component" value="Chromosome"/>
</dbReference>
<dbReference type="GO" id="GO:0005829">
    <property type="term" value="C:cytosol"/>
    <property type="evidence" value="ECO:0007669"/>
    <property type="project" value="TreeGrafter"/>
</dbReference>
<dbReference type="GO" id="GO:0008661">
    <property type="term" value="F:1-deoxy-D-xylulose-5-phosphate synthase activity"/>
    <property type="evidence" value="ECO:0007669"/>
    <property type="project" value="UniProtKB-UniRule"/>
</dbReference>
<dbReference type="GO" id="GO:0000287">
    <property type="term" value="F:magnesium ion binding"/>
    <property type="evidence" value="ECO:0007669"/>
    <property type="project" value="UniProtKB-UniRule"/>
</dbReference>
<dbReference type="GO" id="GO:0030976">
    <property type="term" value="F:thiamine pyrophosphate binding"/>
    <property type="evidence" value="ECO:0007669"/>
    <property type="project" value="UniProtKB-UniRule"/>
</dbReference>
<dbReference type="GO" id="GO:0052865">
    <property type="term" value="P:1-deoxy-D-xylulose 5-phosphate biosynthetic process"/>
    <property type="evidence" value="ECO:0007669"/>
    <property type="project" value="UniProtKB-UniPathway"/>
</dbReference>
<dbReference type="GO" id="GO:0019288">
    <property type="term" value="P:isopentenyl diphosphate biosynthetic process, methylerythritol 4-phosphate pathway"/>
    <property type="evidence" value="ECO:0007669"/>
    <property type="project" value="TreeGrafter"/>
</dbReference>
<dbReference type="GO" id="GO:0016114">
    <property type="term" value="P:terpenoid biosynthetic process"/>
    <property type="evidence" value="ECO:0007669"/>
    <property type="project" value="UniProtKB-UniRule"/>
</dbReference>
<dbReference type="GO" id="GO:0009228">
    <property type="term" value="P:thiamine biosynthetic process"/>
    <property type="evidence" value="ECO:0007669"/>
    <property type="project" value="UniProtKB-UniRule"/>
</dbReference>
<dbReference type="CDD" id="cd02007">
    <property type="entry name" value="TPP_DXS"/>
    <property type="match status" value="1"/>
</dbReference>
<dbReference type="CDD" id="cd07033">
    <property type="entry name" value="TPP_PYR_DXS_TK_like"/>
    <property type="match status" value="1"/>
</dbReference>
<dbReference type="FunFam" id="3.40.50.920:FF:000002">
    <property type="entry name" value="1-deoxy-D-xylulose-5-phosphate synthase"/>
    <property type="match status" value="1"/>
</dbReference>
<dbReference type="FunFam" id="3.40.50.970:FF:000005">
    <property type="entry name" value="1-deoxy-D-xylulose-5-phosphate synthase"/>
    <property type="match status" value="1"/>
</dbReference>
<dbReference type="Gene3D" id="3.40.50.920">
    <property type="match status" value="1"/>
</dbReference>
<dbReference type="Gene3D" id="3.40.50.970">
    <property type="match status" value="2"/>
</dbReference>
<dbReference type="HAMAP" id="MF_00315">
    <property type="entry name" value="DXP_synth"/>
    <property type="match status" value="1"/>
</dbReference>
<dbReference type="InterPro" id="IPR005477">
    <property type="entry name" value="Dxylulose-5-P_synthase"/>
</dbReference>
<dbReference type="InterPro" id="IPR029061">
    <property type="entry name" value="THDP-binding"/>
</dbReference>
<dbReference type="InterPro" id="IPR009014">
    <property type="entry name" value="Transketo_C/PFOR_II"/>
</dbReference>
<dbReference type="InterPro" id="IPR005475">
    <property type="entry name" value="Transketolase-like_Pyr-bd"/>
</dbReference>
<dbReference type="InterPro" id="IPR020826">
    <property type="entry name" value="Transketolase_BS"/>
</dbReference>
<dbReference type="InterPro" id="IPR033248">
    <property type="entry name" value="Transketolase_C"/>
</dbReference>
<dbReference type="InterPro" id="IPR049557">
    <property type="entry name" value="Transketolase_CS"/>
</dbReference>
<dbReference type="NCBIfam" id="TIGR00204">
    <property type="entry name" value="dxs"/>
    <property type="match status" value="1"/>
</dbReference>
<dbReference type="NCBIfam" id="NF003933">
    <property type="entry name" value="PRK05444.2-2"/>
    <property type="match status" value="1"/>
</dbReference>
<dbReference type="PANTHER" id="PTHR43322">
    <property type="entry name" value="1-D-DEOXYXYLULOSE 5-PHOSPHATE SYNTHASE-RELATED"/>
    <property type="match status" value="1"/>
</dbReference>
<dbReference type="PANTHER" id="PTHR43322:SF5">
    <property type="entry name" value="1-DEOXY-D-XYLULOSE-5-PHOSPHATE SYNTHASE, CHLOROPLASTIC"/>
    <property type="match status" value="1"/>
</dbReference>
<dbReference type="Pfam" id="PF13292">
    <property type="entry name" value="DXP_synthase_N"/>
    <property type="match status" value="1"/>
</dbReference>
<dbReference type="Pfam" id="PF02779">
    <property type="entry name" value="Transket_pyr"/>
    <property type="match status" value="1"/>
</dbReference>
<dbReference type="Pfam" id="PF02780">
    <property type="entry name" value="Transketolase_C"/>
    <property type="match status" value="1"/>
</dbReference>
<dbReference type="SMART" id="SM00861">
    <property type="entry name" value="Transket_pyr"/>
    <property type="match status" value="1"/>
</dbReference>
<dbReference type="SUPFAM" id="SSF52518">
    <property type="entry name" value="Thiamin diphosphate-binding fold (THDP-binding)"/>
    <property type="match status" value="2"/>
</dbReference>
<dbReference type="SUPFAM" id="SSF52922">
    <property type="entry name" value="TK C-terminal domain-like"/>
    <property type="match status" value="1"/>
</dbReference>
<dbReference type="PROSITE" id="PS00801">
    <property type="entry name" value="TRANSKETOLASE_1"/>
    <property type="match status" value="1"/>
</dbReference>
<dbReference type="PROSITE" id="PS00802">
    <property type="entry name" value="TRANSKETOLASE_2"/>
    <property type="match status" value="1"/>
</dbReference>
<accession>A1T7Z0</accession>
<comment type="function">
    <text evidence="1">Catalyzes the acyloin condensation reaction between C atoms 2 and 3 of pyruvate and glyceraldehyde 3-phosphate to yield 1-deoxy-D-xylulose-5-phosphate (DXP).</text>
</comment>
<comment type="catalytic activity">
    <reaction evidence="1">
        <text>D-glyceraldehyde 3-phosphate + pyruvate + H(+) = 1-deoxy-D-xylulose 5-phosphate + CO2</text>
        <dbReference type="Rhea" id="RHEA:12605"/>
        <dbReference type="ChEBI" id="CHEBI:15361"/>
        <dbReference type="ChEBI" id="CHEBI:15378"/>
        <dbReference type="ChEBI" id="CHEBI:16526"/>
        <dbReference type="ChEBI" id="CHEBI:57792"/>
        <dbReference type="ChEBI" id="CHEBI:59776"/>
        <dbReference type="EC" id="2.2.1.7"/>
    </reaction>
</comment>
<comment type="cofactor">
    <cofactor evidence="1">
        <name>Mg(2+)</name>
        <dbReference type="ChEBI" id="CHEBI:18420"/>
    </cofactor>
    <text evidence="1">Binds 1 Mg(2+) ion per subunit.</text>
</comment>
<comment type="cofactor">
    <cofactor evidence="1">
        <name>thiamine diphosphate</name>
        <dbReference type="ChEBI" id="CHEBI:58937"/>
    </cofactor>
    <text evidence="1">Binds 1 thiamine pyrophosphate per subunit.</text>
</comment>
<comment type="pathway">
    <text evidence="1">Metabolic intermediate biosynthesis; 1-deoxy-D-xylulose 5-phosphate biosynthesis; 1-deoxy-D-xylulose 5-phosphate from D-glyceraldehyde 3-phosphate and pyruvate: step 1/1.</text>
</comment>
<comment type="subunit">
    <text evidence="1">Homodimer.</text>
</comment>
<comment type="similarity">
    <text evidence="1">Belongs to the transketolase family. DXPS subfamily.</text>
</comment>
<organism>
    <name type="scientific">Mycolicibacterium vanbaalenii (strain DSM 7251 / JCM 13017 / BCRC 16820 / KCTC 9966 / NRRL B-24157 / PYR-1)</name>
    <name type="common">Mycobacterium vanbaalenii</name>
    <dbReference type="NCBI Taxonomy" id="350058"/>
    <lineage>
        <taxon>Bacteria</taxon>
        <taxon>Bacillati</taxon>
        <taxon>Actinomycetota</taxon>
        <taxon>Actinomycetes</taxon>
        <taxon>Mycobacteriales</taxon>
        <taxon>Mycobacteriaceae</taxon>
        <taxon>Mycolicibacterium</taxon>
    </lineage>
</organism>
<name>DXS_MYCVP</name>
<protein>
    <recommendedName>
        <fullName evidence="1">1-deoxy-D-xylulose-5-phosphate synthase</fullName>
        <ecNumber evidence="1">2.2.1.7</ecNumber>
    </recommendedName>
    <alternativeName>
        <fullName evidence="1">1-deoxyxylulose-5-phosphate synthase</fullName>
        <shortName evidence="1">DXP synthase</shortName>
        <shortName evidence="1">DXPS</shortName>
    </alternativeName>
</protein>